<protein>
    <recommendedName>
        <fullName evidence="1">Dephospho-CoA kinase</fullName>
        <ecNumber evidence="1">2.7.1.24</ecNumber>
    </recommendedName>
    <alternativeName>
        <fullName evidence="1">Dephosphocoenzyme A kinase</fullName>
    </alternativeName>
</protein>
<comment type="function">
    <text evidence="1">Catalyzes the phosphorylation of the 3'-hydroxyl group of dephosphocoenzyme A to form coenzyme A.</text>
</comment>
<comment type="catalytic activity">
    <reaction evidence="1">
        <text>3'-dephospho-CoA + ATP = ADP + CoA + H(+)</text>
        <dbReference type="Rhea" id="RHEA:18245"/>
        <dbReference type="ChEBI" id="CHEBI:15378"/>
        <dbReference type="ChEBI" id="CHEBI:30616"/>
        <dbReference type="ChEBI" id="CHEBI:57287"/>
        <dbReference type="ChEBI" id="CHEBI:57328"/>
        <dbReference type="ChEBI" id="CHEBI:456216"/>
        <dbReference type="EC" id="2.7.1.24"/>
    </reaction>
</comment>
<comment type="pathway">
    <text evidence="1">Cofactor biosynthesis; coenzyme A biosynthesis; CoA from (R)-pantothenate: step 5/5.</text>
</comment>
<comment type="subcellular location">
    <subcellularLocation>
        <location evidence="1">Cytoplasm</location>
    </subcellularLocation>
</comment>
<comment type="similarity">
    <text evidence="1">Belongs to the CoaE family.</text>
</comment>
<organism>
    <name type="scientific">Paramagnetospirillum magneticum (strain ATCC 700264 / AMB-1)</name>
    <name type="common">Magnetospirillum magneticum</name>
    <dbReference type="NCBI Taxonomy" id="342108"/>
    <lineage>
        <taxon>Bacteria</taxon>
        <taxon>Pseudomonadati</taxon>
        <taxon>Pseudomonadota</taxon>
        <taxon>Alphaproteobacteria</taxon>
        <taxon>Rhodospirillales</taxon>
        <taxon>Magnetospirillaceae</taxon>
        <taxon>Paramagnetospirillum</taxon>
    </lineage>
</organism>
<evidence type="ECO:0000255" key="1">
    <source>
        <dbReference type="HAMAP-Rule" id="MF_00376"/>
    </source>
</evidence>
<dbReference type="EC" id="2.7.1.24" evidence="1"/>
<dbReference type="EMBL" id="AP007255">
    <property type="protein sequence ID" value="BAE53350.1"/>
    <property type="molecule type" value="Genomic_DNA"/>
</dbReference>
<dbReference type="RefSeq" id="WP_011386890.1">
    <property type="nucleotide sequence ID" value="NC_007626.1"/>
</dbReference>
<dbReference type="SMR" id="Q2VYH5"/>
<dbReference type="STRING" id="342108.amb4546"/>
<dbReference type="KEGG" id="mag:amb4546"/>
<dbReference type="HOGENOM" id="CLU_057180_3_0_5"/>
<dbReference type="OrthoDB" id="9812943at2"/>
<dbReference type="UniPathway" id="UPA00241">
    <property type="reaction ID" value="UER00356"/>
</dbReference>
<dbReference type="Proteomes" id="UP000007058">
    <property type="component" value="Chromosome"/>
</dbReference>
<dbReference type="GO" id="GO:0005737">
    <property type="term" value="C:cytoplasm"/>
    <property type="evidence" value="ECO:0007669"/>
    <property type="project" value="UniProtKB-SubCell"/>
</dbReference>
<dbReference type="GO" id="GO:0005524">
    <property type="term" value="F:ATP binding"/>
    <property type="evidence" value="ECO:0007669"/>
    <property type="project" value="UniProtKB-UniRule"/>
</dbReference>
<dbReference type="GO" id="GO:0004140">
    <property type="term" value="F:dephospho-CoA kinase activity"/>
    <property type="evidence" value="ECO:0007669"/>
    <property type="project" value="UniProtKB-UniRule"/>
</dbReference>
<dbReference type="GO" id="GO:0015937">
    <property type="term" value="P:coenzyme A biosynthetic process"/>
    <property type="evidence" value="ECO:0007669"/>
    <property type="project" value="UniProtKB-UniRule"/>
</dbReference>
<dbReference type="CDD" id="cd02022">
    <property type="entry name" value="DPCK"/>
    <property type="match status" value="1"/>
</dbReference>
<dbReference type="Gene3D" id="3.40.50.300">
    <property type="entry name" value="P-loop containing nucleotide triphosphate hydrolases"/>
    <property type="match status" value="1"/>
</dbReference>
<dbReference type="HAMAP" id="MF_00376">
    <property type="entry name" value="Dephospho_CoA_kinase"/>
    <property type="match status" value="1"/>
</dbReference>
<dbReference type="InterPro" id="IPR001977">
    <property type="entry name" value="Depp_CoAkinase"/>
</dbReference>
<dbReference type="InterPro" id="IPR027417">
    <property type="entry name" value="P-loop_NTPase"/>
</dbReference>
<dbReference type="NCBIfam" id="TIGR00152">
    <property type="entry name" value="dephospho-CoA kinase"/>
    <property type="match status" value="1"/>
</dbReference>
<dbReference type="PANTHER" id="PTHR10695:SF46">
    <property type="entry name" value="BIFUNCTIONAL COENZYME A SYNTHASE-RELATED"/>
    <property type="match status" value="1"/>
</dbReference>
<dbReference type="PANTHER" id="PTHR10695">
    <property type="entry name" value="DEPHOSPHO-COA KINASE-RELATED"/>
    <property type="match status" value="1"/>
</dbReference>
<dbReference type="Pfam" id="PF01121">
    <property type="entry name" value="CoaE"/>
    <property type="match status" value="1"/>
</dbReference>
<dbReference type="SUPFAM" id="SSF52540">
    <property type="entry name" value="P-loop containing nucleoside triphosphate hydrolases"/>
    <property type="match status" value="1"/>
</dbReference>
<dbReference type="PROSITE" id="PS51219">
    <property type="entry name" value="DPCK"/>
    <property type="match status" value="1"/>
</dbReference>
<gene>
    <name evidence="1" type="primary">coaE</name>
    <name type="ordered locus">amb4546</name>
</gene>
<name>COAE_PARM1</name>
<keyword id="KW-0067">ATP-binding</keyword>
<keyword id="KW-0173">Coenzyme A biosynthesis</keyword>
<keyword id="KW-0963">Cytoplasm</keyword>
<keyword id="KW-0418">Kinase</keyword>
<keyword id="KW-0547">Nucleotide-binding</keyword>
<keyword id="KW-0808">Transferase</keyword>
<sequence length="212" mass="22359">MKILGLTGSIGMGKSTAAAMLRRLGVPVHDADATVHALFARGGKAVAAVDAAFPGVVRDGAVDRTALGAQVFGDGAALKRLEAIVHPLVRAAERDFLARHRRARTRLVVLDIPLLFETHGESRCDLVAVVSAPAFLQAARVLARPGMTRQRLDAVLAKQMPDGQKRRRADVVIPTGLGKGPALKRLKAVVAMMRGSRPAAPVGGDASKPPFY</sequence>
<reference key="1">
    <citation type="journal article" date="2005" name="DNA Res.">
        <title>Complete genome sequence of the facultative anaerobic magnetotactic bacterium Magnetospirillum sp. strain AMB-1.</title>
        <authorList>
            <person name="Matsunaga T."/>
            <person name="Okamura Y."/>
            <person name="Fukuda Y."/>
            <person name="Wahyudi A.T."/>
            <person name="Murase Y."/>
            <person name="Takeyama H."/>
        </authorList>
    </citation>
    <scope>NUCLEOTIDE SEQUENCE [LARGE SCALE GENOMIC DNA]</scope>
    <source>
        <strain>ATCC 700264 / AMB-1</strain>
    </source>
</reference>
<feature type="chain" id="PRO_0000243303" description="Dephospho-CoA kinase">
    <location>
        <begin position="1"/>
        <end position="212"/>
    </location>
</feature>
<feature type="domain" description="DPCK" evidence="1">
    <location>
        <begin position="3"/>
        <end position="204"/>
    </location>
</feature>
<feature type="binding site" evidence="1">
    <location>
        <begin position="11"/>
        <end position="16"/>
    </location>
    <ligand>
        <name>ATP</name>
        <dbReference type="ChEBI" id="CHEBI:30616"/>
    </ligand>
</feature>
<accession>Q2VYH5</accession>
<proteinExistence type="inferred from homology"/>